<comment type="function">
    <text evidence="1">Catalyzes the NADPH-dependent rearrangement and reduction of 1-deoxy-D-xylulose-5-phosphate (DXP) to 2-C-methyl-D-erythritol 4-phosphate (MEP).</text>
</comment>
<comment type="catalytic activity">
    <reaction evidence="1">
        <text>2-C-methyl-D-erythritol 4-phosphate + NADP(+) = 1-deoxy-D-xylulose 5-phosphate + NADPH + H(+)</text>
        <dbReference type="Rhea" id="RHEA:13717"/>
        <dbReference type="ChEBI" id="CHEBI:15378"/>
        <dbReference type="ChEBI" id="CHEBI:57783"/>
        <dbReference type="ChEBI" id="CHEBI:57792"/>
        <dbReference type="ChEBI" id="CHEBI:58262"/>
        <dbReference type="ChEBI" id="CHEBI:58349"/>
        <dbReference type="EC" id="1.1.1.267"/>
    </reaction>
    <physiologicalReaction direction="right-to-left" evidence="1">
        <dbReference type="Rhea" id="RHEA:13719"/>
    </physiologicalReaction>
</comment>
<comment type="cofactor">
    <cofactor evidence="1">
        <name>Mg(2+)</name>
        <dbReference type="ChEBI" id="CHEBI:18420"/>
    </cofactor>
    <cofactor evidence="1">
        <name>Mn(2+)</name>
        <dbReference type="ChEBI" id="CHEBI:29035"/>
    </cofactor>
</comment>
<comment type="pathway">
    <text evidence="1">Isoprenoid biosynthesis; isopentenyl diphosphate biosynthesis via DXP pathway; isopentenyl diphosphate from 1-deoxy-D-xylulose 5-phosphate: step 1/6.</text>
</comment>
<comment type="similarity">
    <text evidence="1">Belongs to the DXR family.</text>
</comment>
<keyword id="KW-0414">Isoprene biosynthesis</keyword>
<keyword id="KW-0464">Manganese</keyword>
<keyword id="KW-0479">Metal-binding</keyword>
<keyword id="KW-0521">NADP</keyword>
<keyword id="KW-0560">Oxidoreductase</keyword>
<keyword id="KW-1185">Reference proteome</keyword>
<feature type="chain" id="PRO_0000163625" description="1-deoxy-D-xylulose 5-phosphate reductoisomerase">
    <location>
        <begin position="1"/>
        <end position="398"/>
    </location>
</feature>
<feature type="binding site" evidence="1">
    <location>
        <position position="11"/>
    </location>
    <ligand>
        <name>NADPH</name>
        <dbReference type="ChEBI" id="CHEBI:57783"/>
    </ligand>
</feature>
<feature type="binding site" evidence="1">
    <location>
        <position position="12"/>
    </location>
    <ligand>
        <name>NADPH</name>
        <dbReference type="ChEBI" id="CHEBI:57783"/>
    </ligand>
</feature>
<feature type="binding site" evidence="1">
    <location>
        <position position="13"/>
    </location>
    <ligand>
        <name>NADPH</name>
        <dbReference type="ChEBI" id="CHEBI:57783"/>
    </ligand>
</feature>
<feature type="binding site" evidence="1">
    <location>
        <position position="14"/>
    </location>
    <ligand>
        <name>NADPH</name>
        <dbReference type="ChEBI" id="CHEBI:57783"/>
    </ligand>
</feature>
<feature type="binding site" evidence="1">
    <location>
        <position position="38"/>
    </location>
    <ligand>
        <name>NADPH</name>
        <dbReference type="ChEBI" id="CHEBI:57783"/>
    </ligand>
</feature>
<feature type="binding site" evidence="1">
    <location>
        <position position="39"/>
    </location>
    <ligand>
        <name>NADPH</name>
        <dbReference type="ChEBI" id="CHEBI:57783"/>
    </ligand>
</feature>
<feature type="binding site" evidence="1">
    <location>
        <position position="125"/>
    </location>
    <ligand>
        <name>NADPH</name>
        <dbReference type="ChEBI" id="CHEBI:57783"/>
    </ligand>
</feature>
<feature type="binding site" evidence="1">
    <location>
        <position position="126"/>
    </location>
    <ligand>
        <name>1-deoxy-D-xylulose 5-phosphate</name>
        <dbReference type="ChEBI" id="CHEBI:57792"/>
    </ligand>
</feature>
<feature type="binding site" evidence="1">
    <location>
        <position position="127"/>
    </location>
    <ligand>
        <name>NADPH</name>
        <dbReference type="ChEBI" id="CHEBI:57783"/>
    </ligand>
</feature>
<feature type="binding site" evidence="1">
    <location>
        <position position="151"/>
    </location>
    <ligand>
        <name>Mn(2+)</name>
        <dbReference type="ChEBI" id="CHEBI:29035"/>
    </ligand>
</feature>
<feature type="binding site" evidence="1">
    <location>
        <position position="152"/>
    </location>
    <ligand>
        <name>1-deoxy-D-xylulose 5-phosphate</name>
        <dbReference type="ChEBI" id="CHEBI:57792"/>
    </ligand>
</feature>
<feature type="binding site" evidence="1">
    <location>
        <position position="153"/>
    </location>
    <ligand>
        <name>1-deoxy-D-xylulose 5-phosphate</name>
        <dbReference type="ChEBI" id="CHEBI:57792"/>
    </ligand>
</feature>
<feature type="binding site" evidence="1">
    <location>
        <position position="153"/>
    </location>
    <ligand>
        <name>Mn(2+)</name>
        <dbReference type="ChEBI" id="CHEBI:29035"/>
    </ligand>
</feature>
<feature type="binding site" evidence="1">
    <location>
        <position position="179"/>
    </location>
    <ligand>
        <name>1-deoxy-D-xylulose 5-phosphate</name>
        <dbReference type="ChEBI" id="CHEBI:57792"/>
    </ligand>
</feature>
<feature type="binding site" evidence="1">
    <location>
        <position position="202"/>
    </location>
    <ligand>
        <name>1-deoxy-D-xylulose 5-phosphate</name>
        <dbReference type="ChEBI" id="CHEBI:57792"/>
    </ligand>
</feature>
<feature type="binding site" evidence="1">
    <location>
        <position position="208"/>
    </location>
    <ligand>
        <name>NADPH</name>
        <dbReference type="ChEBI" id="CHEBI:57783"/>
    </ligand>
</feature>
<feature type="binding site" evidence="1">
    <location>
        <position position="215"/>
    </location>
    <ligand>
        <name>1-deoxy-D-xylulose 5-phosphate</name>
        <dbReference type="ChEBI" id="CHEBI:57792"/>
    </ligand>
</feature>
<feature type="binding site" evidence="1">
    <location>
        <position position="220"/>
    </location>
    <ligand>
        <name>1-deoxy-D-xylulose 5-phosphate</name>
        <dbReference type="ChEBI" id="CHEBI:57792"/>
    </ligand>
</feature>
<feature type="binding site" evidence="1">
    <location>
        <position position="221"/>
    </location>
    <ligand>
        <name>1-deoxy-D-xylulose 5-phosphate</name>
        <dbReference type="ChEBI" id="CHEBI:57792"/>
    </ligand>
</feature>
<feature type="binding site" evidence="1">
    <location>
        <position position="224"/>
    </location>
    <ligand>
        <name>1-deoxy-D-xylulose 5-phosphate</name>
        <dbReference type="ChEBI" id="CHEBI:57792"/>
    </ligand>
</feature>
<feature type="binding site" evidence="1">
    <location>
        <position position="224"/>
    </location>
    <ligand>
        <name>Mn(2+)</name>
        <dbReference type="ChEBI" id="CHEBI:29035"/>
    </ligand>
</feature>
<gene>
    <name evidence="1" type="primary">dxr</name>
    <name type="ordered locus">BPSL2153</name>
</gene>
<accession>Q63T18</accession>
<dbReference type="EC" id="1.1.1.267" evidence="1"/>
<dbReference type="EMBL" id="BX571965">
    <property type="protein sequence ID" value="CAH36155.1"/>
    <property type="molecule type" value="Genomic_DNA"/>
</dbReference>
<dbReference type="RefSeq" id="WP_004527290.1">
    <property type="nucleotide sequence ID" value="NZ_CP009538.1"/>
</dbReference>
<dbReference type="RefSeq" id="YP_108748.1">
    <property type="nucleotide sequence ID" value="NC_006350.1"/>
</dbReference>
<dbReference type="SMR" id="Q63T18"/>
<dbReference type="STRING" id="272560.BPSL2153"/>
<dbReference type="KEGG" id="bps:BPSL2153"/>
<dbReference type="PATRIC" id="fig|272560.51.peg.3299"/>
<dbReference type="eggNOG" id="COG0743">
    <property type="taxonomic scope" value="Bacteria"/>
</dbReference>
<dbReference type="UniPathway" id="UPA00056">
    <property type="reaction ID" value="UER00092"/>
</dbReference>
<dbReference type="Proteomes" id="UP000000605">
    <property type="component" value="Chromosome 1"/>
</dbReference>
<dbReference type="GO" id="GO:0030604">
    <property type="term" value="F:1-deoxy-D-xylulose-5-phosphate reductoisomerase activity"/>
    <property type="evidence" value="ECO:0007669"/>
    <property type="project" value="UniProtKB-UniRule"/>
</dbReference>
<dbReference type="GO" id="GO:0030145">
    <property type="term" value="F:manganese ion binding"/>
    <property type="evidence" value="ECO:0007669"/>
    <property type="project" value="TreeGrafter"/>
</dbReference>
<dbReference type="GO" id="GO:0070402">
    <property type="term" value="F:NADPH binding"/>
    <property type="evidence" value="ECO:0007669"/>
    <property type="project" value="InterPro"/>
</dbReference>
<dbReference type="GO" id="GO:0051484">
    <property type="term" value="P:isopentenyl diphosphate biosynthetic process, methylerythritol 4-phosphate pathway involved in terpenoid biosynthetic process"/>
    <property type="evidence" value="ECO:0007669"/>
    <property type="project" value="TreeGrafter"/>
</dbReference>
<dbReference type="FunFam" id="1.10.1740.10:FF:000004">
    <property type="entry name" value="1-deoxy-D-xylulose 5-phosphate reductoisomerase"/>
    <property type="match status" value="1"/>
</dbReference>
<dbReference type="FunFam" id="3.40.50.720:FF:000045">
    <property type="entry name" value="1-deoxy-D-xylulose 5-phosphate reductoisomerase"/>
    <property type="match status" value="1"/>
</dbReference>
<dbReference type="Gene3D" id="1.10.1740.10">
    <property type="match status" value="1"/>
</dbReference>
<dbReference type="Gene3D" id="3.40.50.720">
    <property type="entry name" value="NAD(P)-binding Rossmann-like Domain"/>
    <property type="match status" value="1"/>
</dbReference>
<dbReference type="HAMAP" id="MF_00183">
    <property type="entry name" value="DXP_reductoisom"/>
    <property type="match status" value="1"/>
</dbReference>
<dbReference type="InterPro" id="IPR003821">
    <property type="entry name" value="DXP_reductoisomerase"/>
</dbReference>
<dbReference type="InterPro" id="IPR013644">
    <property type="entry name" value="DXP_reductoisomerase_C"/>
</dbReference>
<dbReference type="InterPro" id="IPR013512">
    <property type="entry name" value="DXP_reductoisomerase_N"/>
</dbReference>
<dbReference type="InterPro" id="IPR026877">
    <property type="entry name" value="DXPR_C"/>
</dbReference>
<dbReference type="InterPro" id="IPR036169">
    <property type="entry name" value="DXPR_C_sf"/>
</dbReference>
<dbReference type="InterPro" id="IPR036291">
    <property type="entry name" value="NAD(P)-bd_dom_sf"/>
</dbReference>
<dbReference type="NCBIfam" id="TIGR00243">
    <property type="entry name" value="Dxr"/>
    <property type="match status" value="1"/>
</dbReference>
<dbReference type="NCBIfam" id="NF003938">
    <property type="entry name" value="PRK05447.1-1"/>
    <property type="match status" value="1"/>
</dbReference>
<dbReference type="NCBIfam" id="NF009114">
    <property type="entry name" value="PRK12464.1"/>
    <property type="match status" value="1"/>
</dbReference>
<dbReference type="PANTHER" id="PTHR30525">
    <property type="entry name" value="1-DEOXY-D-XYLULOSE 5-PHOSPHATE REDUCTOISOMERASE"/>
    <property type="match status" value="1"/>
</dbReference>
<dbReference type="PANTHER" id="PTHR30525:SF0">
    <property type="entry name" value="1-DEOXY-D-XYLULOSE 5-PHOSPHATE REDUCTOISOMERASE, CHLOROPLASTIC"/>
    <property type="match status" value="1"/>
</dbReference>
<dbReference type="Pfam" id="PF08436">
    <property type="entry name" value="DXP_redisom_C"/>
    <property type="match status" value="1"/>
</dbReference>
<dbReference type="Pfam" id="PF02670">
    <property type="entry name" value="DXP_reductoisom"/>
    <property type="match status" value="1"/>
</dbReference>
<dbReference type="Pfam" id="PF13288">
    <property type="entry name" value="DXPR_C"/>
    <property type="match status" value="1"/>
</dbReference>
<dbReference type="PIRSF" id="PIRSF006205">
    <property type="entry name" value="Dxp_reductismrs"/>
    <property type="match status" value="1"/>
</dbReference>
<dbReference type="SUPFAM" id="SSF69055">
    <property type="entry name" value="1-deoxy-D-xylulose-5-phosphate reductoisomerase, C-terminal domain"/>
    <property type="match status" value="1"/>
</dbReference>
<dbReference type="SUPFAM" id="SSF55347">
    <property type="entry name" value="Glyceraldehyde-3-phosphate dehydrogenase-like, C-terminal domain"/>
    <property type="match status" value="1"/>
</dbReference>
<dbReference type="SUPFAM" id="SSF51735">
    <property type="entry name" value="NAD(P)-binding Rossmann-fold domains"/>
    <property type="match status" value="1"/>
</dbReference>
<organism>
    <name type="scientific">Burkholderia pseudomallei (strain K96243)</name>
    <dbReference type="NCBI Taxonomy" id="272560"/>
    <lineage>
        <taxon>Bacteria</taxon>
        <taxon>Pseudomonadati</taxon>
        <taxon>Pseudomonadota</taxon>
        <taxon>Betaproteobacteria</taxon>
        <taxon>Burkholderiales</taxon>
        <taxon>Burkholderiaceae</taxon>
        <taxon>Burkholderia</taxon>
        <taxon>pseudomallei group</taxon>
    </lineage>
</organism>
<reference key="1">
    <citation type="journal article" date="2004" name="Proc. Natl. Acad. Sci. U.S.A.">
        <title>Genomic plasticity of the causative agent of melioidosis, Burkholderia pseudomallei.</title>
        <authorList>
            <person name="Holden M.T.G."/>
            <person name="Titball R.W."/>
            <person name="Peacock S.J."/>
            <person name="Cerdeno-Tarraga A.-M."/>
            <person name="Atkins T."/>
            <person name="Crossman L.C."/>
            <person name="Pitt T."/>
            <person name="Churcher C."/>
            <person name="Mungall K.L."/>
            <person name="Bentley S.D."/>
            <person name="Sebaihia M."/>
            <person name="Thomson N.R."/>
            <person name="Bason N."/>
            <person name="Beacham I.R."/>
            <person name="Brooks K."/>
            <person name="Brown K.A."/>
            <person name="Brown N.F."/>
            <person name="Challis G.L."/>
            <person name="Cherevach I."/>
            <person name="Chillingworth T."/>
            <person name="Cronin A."/>
            <person name="Crossett B."/>
            <person name="Davis P."/>
            <person name="DeShazer D."/>
            <person name="Feltwell T."/>
            <person name="Fraser A."/>
            <person name="Hance Z."/>
            <person name="Hauser H."/>
            <person name="Holroyd S."/>
            <person name="Jagels K."/>
            <person name="Keith K.E."/>
            <person name="Maddison M."/>
            <person name="Moule S."/>
            <person name="Price C."/>
            <person name="Quail M.A."/>
            <person name="Rabbinowitsch E."/>
            <person name="Rutherford K."/>
            <person name="Sanders M."/>
            <person name="Simmonds M."/>
            <person name="Songsivilai S."/>
            <person name="Stevens K."/>
            <person name="Tumapa S."/>
            <person name="Vesaratchavest M."/>
            <person name="Whitehead S."/>
            <person name="Yeats C."/>
            <person name="Barrell B.G."/>
            <person name="Oyston P.C.F."/>
            <person name="Parkhill J."/>
        </authorList>
    </citation>
    <scope>NUCLEOTIDE SEQUENCE [LARGE SCALE GENOMIC DNA]</scope>
    <source>
        <strain>K96243</strain>
    </source>
</reference>
<name>DXR_BURPS</name>
<protein>
    <recommendedName>
        <fullName evidence="1">1-deoxy-D-xylulose 5-phosphate reductoisomerase</fullName>
        <shortName evidence="1">DXP reductoisomerase</shortName>
        <ecNumber evidence="1">1.1.1.267</ecNumber>
    </recommendedName>
    <alternativeName>
        <fullName evidence="1">1-deoxyxylulose-5-phosphate reductoisomerase</fullName>
    </alternativeName>
    <alternativeName>
        <fullName evidence="1">2-C-methyl-D-erythritol 4-phosphate synthase</fullName>
    </alternativeName>
</protein>
<sequence length="398" mass="41641">MQKRLTLLGSTGSIGDSTLDVVARHPERFAVHALTAHRNGEKLVAQCLRFAPDVAVVGDAETAARVEAQLRAAGSRTQVAYGKQALVDVSKSDGCDTVVAAIVGAAGLAPSLAAARAGKRILLANKEALVMSGAIFMDAVRDHGAILLPVDSEHNAIFQCMPRDAAEHGGIAKIIVTASGGPFRTREPATLASVTPDEACKHPNWVMGRKISVDSATMMNKGLEVIEAHWLFGLPSERIDVLIHPQSVIHSLVSYRDGSVLAQLGNPDMRTPIAHALAFPERVDAGVAQLDLAQIATLTFEKPDYARFPCLALAIDALEAGGVASAALNAANEIAVDAFLSRRIRFTAIAQTVGAVLDGLSNRTPGGLDDVIEADAAARRAATAFIGKLPAPGVERAA</sequence>
<proteinExistence type="inferred from homology"/>
<evidence type="ECO:0000255" key="1">
    <source>
        <dbReference type="HAMAP-Rule" id="MF_00183"/>
    </source>
</evidence>